<accession>C3K3J9</accession>
<feature type="chain" id="PRO_1000212873" description="UPF0301 protein PFLU_5755">
    <location>
        <begin position="1"/>
        <end position="189"/>
    </location>
</feature>
<sequence>MKNVSPTYLKHQFLIAMPHMADPNFAQTLTYIVEHTAKGAMGLVINRPQELNLADILEQLRPEVDPPARCQGVPIYIGGPVQTDRGFVLHPTGPKFQATVDLEGVSLSTSQDVLFAIADGVGPEQSVITLGYAGWEAGQLEAELASNAWLTCPFDAEILFNTPSELRLEAAAAKLRVNLNLLTSQAGHA</sequence>
<gene>
    <name type="ordered locus">PFLU_5755</name>
</gene>
<name>Y5755_PSEFS</name>
<evidence type="ECO:0000255" key="1">
    <source>
        <dbReference type="HAMAP-Rule" id="MF_00758"/>
    </source>
</evidence>
<dbReference type="EMBL" id="AM181176">
    <property type="protein sequence ID" value="CAY53128.1"/>
    <property type="molecule type" value="Genomic_DNA"/>
</dbReference>
<dbReference type="RefSeq" id="WP_015886337.1">
    <property type="nucleotide sequence ID" value="NC_012660.1"/>
</dbReference>
<dbReference type="SMR" id="C3K3J9"/>
<dbReference type="STRING" id="294.SRM1_05404"/>
<dbReference type="eggNOG" id="COG1678">
    <property type="taxonomic scope" value="Bacteria"/>
</dbReference>
<dbReference type="HOGENOM" id="CLU_057596_1_0_6"/>
<dbReference type="OrthoDB" id="9807486at2"/>
<dbReference type="GO" id="GO:0005829">
    <property type="term" value="C:cytosol"/>
    <property type="evidence" value="ECO:0007669"/>
    <property type="project" value="TreeGrafter"/>
</dbReference>
<dbReference type="Gene3D" id="3.40.1740.10">
    <property type="entry name" value="VC0467-like"/>
    <property type="match status" value="1"/>
</dbReference>
<dbReference type="HAMAP" id="MF_00758">
    <property type="entry name" value="UPF0301"/>
    <property type="match status" value="1"/>
</dbReference>
<dbReference type="InterPro" id="IPR003774">
    <property type="entry name" value="AlgH-like"/>
</dbReference>
<dbReference type="NCBIfam" id="NF001266">
    <property type="entry name" value="PRK00228.1-1"/>
    <property type="match status" value="1"/>
</dbReference>
<dbReference type="PANTHER" id="PTHR30327">
    <property type="entry name" value="UNCHARACTERIZED PROTEIN YQGE"/>
    <property type="match status" value="1"/>
</dbReference>
<dbReference type="PANTHER" id="PTHR30327:SF1">
    <property type="entry name" value="UPF0301 PROTEIN YQGE"/>
    <property type="match status" value="1"/>
</dbReference>
<dbReference type="Pfam" id="PF02622">
    <property type="entry name" value="DUF179"/>
    <property type="match status" value="1"/>
</dbReference>
<dbReference type="SUPFAM" id="SSF143456">
    <property type="entry name" value="VC0467-like"/>
    <property type="match status" value="1"/>
</dbReference>
<protein>
    <recommendedName>
        <fullName evidence="1">UPF0301 protein PFLU_5755</fullName>
    </recommendedName>
</protein>
<comment type="similarity">
    <text evidence="1">Belongs to the UPF0301 (AlgH) family.</text>
</comment>
<proteinExistence type="inferred from homology"/>
<reference key="1">
    <citation type="journal article" date="2009" name="Genome Biol.">
        <title>Genomic and genetic analyses of diversity and plant interactions of Pseudomonas fluorescens.</title>
        <authorList>
            <person name="Silby M.W."/>
            <person name="Cerdeno-Tarraga A.M."/>
            <person name="Vernikos G.S."/>
            <person name="Giddens S.R."/>
            <person name="Jackson R.W."/>
            <person name="Preston G.M."/>
            <person name="Zhang X.-X."/>
            <person name="Moon C.D."/>
            <person name="Gehrig S.M."/>
            <person name="Godfrey S.A.C."/>
            <person name="Knight C.G."/>
            <person name="Malone J.G."/>
            <person name="Robinson Z."/>
            <person name="Spiers A.J."/>
            <person name="Harris S."/>
            <person name="Challis G.L."/>
            <person name="Yaxley A.M."/>
            <person name="Harris D."/>
            <person name="Seeger K."/>
            <person name="Murphy L."/>
            <person name="Rutter S."/>
            <person name="Squares R."/>
            <person name="Quail M.A."/>
            <person name="Saunders E."/>
            <person name="Mavromatis K."/>
            <person name="Brettin T.S."/>
            <person name="Bentley S.D."/>
            <person name="Hothersall J."/>
            <person name="Stephens E."/>
            <person name="Thomas C.M."/>
            <person name="Parkhill J."/>
            <person name="Levy S.B."/>
            <person name="Rainey P.B."/>
            <person name="Thomson N.R."/>
        </authorList>
    </citation>
    <scope>NUCLEOTIDE SEQUENCE [LARGE SCALE GENOMIC DNA]</scope>
    <source>
        <strain>SBW25</strain>
    </source>
</reference>
<organism>
    <name type="scientific">Pseudomonas fluorescens (strain SBW25)</name>
    <dbReference type="NCBI Taxonomy" id="216595"/>
    <lineage>
        <taxon>Bacteria</taxon>
        <taxon>Pseudomonadati</taxon>
        <taxon>Pseudomonadota</taxon>
        <taxon>Gammaproteobacteria</taxon>
        <taxon>Pseudomonadales</taxon>
        <taxon>Pseudomonadaceae</taxon>
        <taxon>Pseudomonas</taxon>
    </lineage>
</organism>